<evidence type="ECO:0000255" key="1">
    <source>
        <dbReference type="HAMAP-Rule" id="MF_00480"/>
    </source>
</evidence>
<evidence type="ECO:0000305" key="2"/>
<dbReference type="EMBL" id="CP001191">
    <property type="protein sequence ID" value="ACI54622.1"/>
    <property type="molecule type" value="Genomic_DNA"/>
</dbReference>
<dbReference type="RefSeq" id="WP_003578662.1">
    <property type="nucleotide sequence ID" value="NC_011369.1"/>
</dbReference>
<dbReference type="SMR" id="B5ZYT1"/>
<dbReference type="STRING" id="395492.Rleg2_1328"/>
<dbReference type="KEGG" id="rlt:Rleg2_1328"/>
<dbReference type="eggNOG" id="COG0049">
    <property type="taxonomic scope" value="Bacteria"/>
</dbReference>
<dbReference type="HOGENOM" id="CLU_072226_1_1_5"/>
<dbReference type="Proteomes" id="UP000008330">
    <property type="component" value="Chromosome"/>
</dbReference>
<dbReference type="GO" id="GO:0015935">
    <property type="term" value="C:small ribosomal subunit"/>
    <property type="evidence" value="ECO:0007669"/>
    <property type="project" value="InterPro"/>
</dbReference>
<dbReference type="GO" id="GO:0019843">
    <property type="term" value="F:rRNA binding"/>
    <property type="evidence" value="ECO:0007669"/>
    <property type="project" value="UniProtKB-UniRule"/>
</dbReference>
<dbReference type="GO" id="GO:0003735">
    <property type="term" value="F:structural constituent of ribosome"/>
    <property type="evidence" value="ECO:0007669"/>
    <property type="project" value="InterPro"/>
</dbReference>
<dbReference type="GO" id="GO:0000049">
    <property type="term" value="F:tRNA binding"/>
    <property type="evidence" value="ECO:0007669"/>
    <property type="project" value="UniProtKB-UniRule"/>
</dbReference>
<dbReference type="GO" id="GO:0006412">
    <property type="term" value="P:translation"/>
    <property type="evidence" value="ECO:0007669"/>
    <property type="project" value="UniProtKB-UniRule"/>
</dbReference>
<dbReference type="CDD" id="cd14869">
    <property type="entry name" value="uS7_Bacteria"/>
    <property type="match status" value="1"/>
</dbReference>
<dbReference type="FunFam" id="1.10.455.10:FF:000001">
    <property type="entry name" value="30S ribosomal protein S7"/>
    <property type="match status" value="1"/>
</dbReference>
<dbReference type="Gene3D" id="1.10.455.10">
    <property type="entry name" value="Ribosomal protein S7 domain"/>
    <property type="match status" value="1"/>
</dbReference>
<dbReference type="HAMAP" id="MF_00480_B">
    <property type="entry name" value="Ribosomal_uS7_B"/>
    <property type="match status" value="1"/>
</dbReference>
<dbReference type="InterPro" id="IPR000235">
    <property type="entry name" value="Ribosomal_uS7"/>
</dbReference>
<dbReference type="InterPro" id="IPR005717">
    <property type="entry name" value="Ribosomal_uS7_bac/org-type"/>
</dbReference>
<dbReference type="InterPro" id="IPR020606">
    <property type="entry name" value="Ribosomal_uS7_CS"/>
</dbReference>
<dbReference type="InterPro" id="IPR023798">
    <property type="entry name" value="Ribosomal_uS7_dom"/>
</dbReference>
<dbReference type="InterPro" id="IPR036823">
    <property type="entry name" value="Ribosomal_uS7_dom_sf"/>
</dbReference>
<dbReference type="NCBIfam" id="TIGR01029">
    <property type="entry name" value="rpsG_bact"/>
    <property type="match status" value="1"/>
</dbReference>
<dbReference type="PANTHER" id="PTHR11205">
    <property type="entry name" value="RIBOSOMAL PROTEIN S7"/>
    <property type="match status" value="1"/>
</dbReference>
<dbReference type="Pfam" id="PF00177">
    <property type="entry name" value="Ribosomal_S7"/>
    <property type="match status" value="1"/>
</dbReference>
<dbReference type="PIRSF" id="PIRSF002122">
    <property type="entry name" value="RPS7p_RPS7a_RPS5e_RPS7o"/>
    <property type="match status" value="1"/>
</dbReference>
<dbReference type="SUPFAM" id="SSF47973">
    <property type="entry name" value="Ribosomal protein S7"/>
    <property type="match status" value="1"/>
</dbReference>
<dbReference type="PROSITE" id="PS00052">
    <property type="entry name" value="RIBOSOMAL_S7"/>
    <property type="match status" value="1"/>
</dbReference>
<name>RS7_RHILW</name>
<reference key="1">
    <citation type="journal article" date="2010" name="Stand. Genomic Sci.">
        <title>Complete genome sequence of Rhizobium leguminosarum bv trifolii strain WSM2304, an effective microsymbiont of the South American clover Trifolium polymorphum.</title>
        <authorList>
            <person name="Reeve W."/>
            <person name="O'Hara G."/>
            <person name="Chain P."/>
            <person name="Ardley J."/>
            <person name="Brau L."/>
            <person name="Nandesena K."/>
            <person name="Tiwari R."/>
            <person name="Malfatti S."/>
            <person name="Kiss H."/>
            <person name="Lapidus A."/>
            <person name="Copeland A."/>
            <person name="Nolan M."/>
            <person name="Land M."/>
            <person name="Ivanova N."/>
            <person name="Mavromatis K."/>
            <person name="Markowitz V."/>
            <person name="Kyrpides N."/>
            <person name="Melino V."/>
            <person name="Denton M."/>
            <person name="Yates R."/>
            <person name="Howieson J."/>
        </authorList>
    </citation>
    <scope>NUCLEOTIDE SEQUENCE [LARGE SCALE GENOMIC DNA]</scope>
    <source>
        <strain>WSM2304</strain>
    </source>
</reference>
<sequence length="156" mass="17711">MSRRHKAEKREINPDPKFGDLVVTKFMNAIMLDGKKSVAENIVYGAFDVVQGKSKQEPLTVFHSALDNIAPHVEVRSRRVGGATYQVPVDVRPERRQALAIRWLIAAARKRNETTMVDRLSGELLDASNNRGSAVKKREDTHKMADANRAFSHYRW</sequence>
<protein>
    <recommendedName>
        <fullName evidence="1">Small ribosomal subunit protein uS7</fullName>
    </recommendedName>
    <alternativeName>
        <fullName evidence="2">30S ribosomal protein S7</fullName>
    </alternativeName>
</protein>
<feature type="chain" id="PRO_1000125990" description="Small ribosomal subunit protein uS7">
    <location>
        <begin position="1"/>
        <end position="156"/>
    </location>
</feature>
<organism>
    <name type="scientific">Rhizobium leguminosarum bv. trifolii (strain WSM2304)</name>
    <dbReference type="NCBI Taxonomy" id="395492"/>
    <lineage>
        <taxon>Bacteria</taxon>
        <taxon>Pseudomonadati</taxon>
        <taxon>Pseudomonadota</taxon>
        <taxon>Alphaproteobacteria</taxon>
        <taxon>Hyphomicrobiales</taxon>
        <taxon>Rhizobiaceae</taxon>
        <taxon>Rhizobium/Agrobacterium group</taxon>
        <taxon>Rhizobium</taxon>
    </lineage>
</organism>
<comment type="function">
    <text evidence="1">One of the primary rRNA binding proteins, it binds directly to 16S rRNA where it nucleates assembly of the head domain of the 30S subunit. Is located at the subunit interface close to the decoding center, probably blocks exit of the E-site tRNA.</text>
</comment>
<comment type="subunit">
    <text evidence="1">Part of the 30S ribosomal subunit. Contacts proteins S9 and S11.</text>
</comment>
<comment type="similarity">
    <text evidence="1">Belongs to the universal ribosomal protein uS7 family.</text>
</comment>
<gene>
    <name evidence="1" type="primary">rpsG</name>
    <name type="ordered locus">Rleg2_1328</name>
</gene>
<proteinExistence type="inferred from homology"/>
<accession>B5ZYT1</accession>
<keyword id="KW-1185">Reference proteome</keyword>
<keyword id="KW-0687">Ribonucleoprotein</keyword>
<keyword id="KW-0689">Ribosomal protein</keyword>
<keyword id="KW-0694">RNA-binding</keyword>
<keyword id="KW-0699">rRNA-binding</keyword>
<keyword id="KW-0820">tRNA-binding</keyword>